<dbReference type="EMBL" id="AE006470">
    <property type="protein sequence ID" value="AAM73392.1"/>
    <property type="molecule type" value="Genomic_DNA"/>
</dbReference>
<dbReference type="RefSeq" id="NP_663050.1">
    <property type="nucleotide sequence ID" value="NC_002932.3"/>
</dbReference>
<dbReference type="RefSeq" id="WP_010933829.1">
    <property type="nucleotide sequence ID" value="NC_002932.3"/>
</dbReference>
<dbReference type="SMR" id="Q8KAI5"/>
<dbReference type="STRING" id="194439.CT2176"/>
<dbReference type="EnsemblBacteria" id="AAM73392">
    <property type="protein sequence ID" value="AAM73392"/>
    <property type="gene ID" value="CT2176"/>
</dbReference>
<dbReference type="KEGG" id="cte:CT2176"/>
<dbReference type="PATRIC" id="fig|194439.7.peg.1975"/>
<dbReference type="eggNOG" id="COG0199">
    <property type="taxonomic scope" value="Bacteria"/>
</dbReference>
<dbReference type="HOGENOM" id="CLU_139869_0_0_10"/>
<dbReference type="OrthoDB" id="9810484at2"/>
<dbReference type="Proteomes" id="UP000001007">
    <property type="component" value="Chromosome"/>
</dbReference>
<dbReference type="GO" id="GO:0005737">
    <property type="term" value="C:cytoplasm"/>
    <property type="evidence" value="ECO:0007669"/>
    <property type="project" value="UniProtKB-ARBA"/>
</dbReference>
<dbReference type="GO" id="GO:0015935">
    <property type="term" value="C:small ribosomal subunit"/>
    <property type="evidence" value="ECO:0007669"/>
    <property type="project" value="TreeGrafter"/>
</dbReference>
<dbReference type="GO" id="GO:0019843">
    <property type="term" value="F:rRNA binding"/>
    <property type="evidence" value="ECO:0007669"/>
    <property type="project" value="UniProtKB-UniRule"/>
</dbReference>
<dbReference type="GO" id="GO:0003735">
    <property type="term" value="F:structural constituent of ribosome"/>
    <property type="evidence" value="ECO:0007669"/>
    <property type="project" value="InterPro"/>
</dbReference>
<dbReference type="GO" id="GO:0006412">
    <property type="term" value="P:translation"/>
    <property type="evidence" value="ECO:0007669"/>
    <property type="project" value="UniProtKB-UniRule"/>
</dbReference>
<dbReference type="Gene3D" id="4.10.830.10">
    <property type="entry name" value="30s Ribosomal Protein S14, Chain N"/>
    <property type="match status" value="1"/>
</dbReference>
<dbReference type="HAMAP" id="MF_00537">
    <property type="entry name" value="Ribosomal_uS14_1"/>
    <property type="match status" value="1"/>
</dbReference>
<dbReference type="InterPro" id="IPR001209">
    <property type="entry name" value="Ribosomal_uS14"/>
</dbReference>
<dbReference type="InterPro" id="IPR023036">
    <property type="entry name" value="Ribosomal_uS14_bac/plastid"/>
</dbReference>
<dbReference type="InterPro" id="IPR018271">
    <property type="entry name" value="Ribosomal_uS14_CS"/>
</dbReference>
<dbReference type="InterPro" id="IPR043140">
    <property type="entry name" value="Ribosomal_uS14_sf"/>
</dbReference>
<dbReference type="NCBIfam" id="NF006477">
    <property type="entry name" value="PRK08881.1"/>
    <property type="match status" value="1"/>
</dbReference>
<dbReference type="PANTHER" id="PTHR19836">
    <property type="entry name" value="30S RIBOSOMAL PROTEIN S14"/>
    <property type="match status" value="1"/>
</dbReference>
<dbReference type="PANTHER" id="PTHR19836:SF19">
    <property type="entry name" value="SMALL RIBOSOMAL SUBUNIT PROTEIN US14M"/>
    <property type="match status" value="1"/>
</dbReference>
<dbReference type="Pfam" id="PF00253">
    <property type="entry name" value="Ribosomal_S14"/>
    <property type="match status" value="1"/>
</dbReference>
<dbReference type="SUPFAM" id="SSF57716">
    <property type="entry name" value="Glucocorticoid receptor-like (DNA-binding domain)"/>
    <property type="match status" value="1"/>
</dbReference>
<dbReference type="PROSITE" id="PS00527">
    <property type="entry name" value="RIBOSOMAL_S14"/>
    <property type="match status" value="1"/>
</dbReference>
<reference key="1">
    <citation type="journal article" date="2002" name="Proc. Natl. Acad. Sci. U.S.A.">
        <title>The complete genome sequence of Chlorobium tepidum TLS, a photosynthetic, anaerobic, green-sulfur bacterium.</title>
        <authorList>
            <person name="Eisen J.A."/>
            <person name="Nelson K.E."/>
            <person name="Paulsen I.T."/>
            <person name="Heidelberg J.F."/>
            <person name="Wu M."/>
            <person name="Dodson R.J."/>
            <person name="DeBoy R.T."/>
            <person name="Gwinn M.L."/>
            <person name="Nelson W.C."/>
            <person name="Haft D.H."/>
            <person name="Hickey E.K."/>
            <person name="Peterson J.D."/>
            <person name="Durkin A.S."/>
            <person name="Kolonay J.F."/>
            <person name="Yang F."/>
            <person name="Holt I.E."/>
            <person name="Umayam L.A."/>
            <person name="Mason T.M."/>
            <person name="Brenner M."/>
            <person name="Shea T.P."/>
            <person name="Parksey D.S."/>
            <person name="Nierman W.C."/>
            <person name="Feldblyum T.V."/>
            <person name="Hansen C.L."/>
            <person name="Craven M.B."/>
            <person name="Radune D."/>
            <person name="Vamathevan J.J."/>
            <person name="Khouri H.M."/>
            <person name="White O."/>
            <person name="Gruber T.M."/>
            <person name="Ketchum K.A."/>
            <person name="Venter J.C."/>
            <person name="Tettelin H."/>
            <person name="Bryant D.A."/>
            <person name="Fraser C.M."/>
        </authorList>
    </citation>
    <scope>NUCLEOTIDE SEQUENCE [LARGE SCALE GENOMIC DNA]</scope>
    <source>
        <strain>ATCC 49652 / DSM 12025 / NBRC 103806 / TLS</strain>
    </source>
</reference>
<gene>
    <name evidence="1" type="primary">rpsN</name>
    <name type="ordered locus">CT2176</name>
</gene>
<comment type="function">
    <text evidence="1">Binds 16S rRNA, required for the assembly of 30S particles and may also be responsible for determining the conformation of the 16S rRNA at the A site.</text>
</comment>
<comment type="subunit">
    <text evidence="1">Part of the 30S ribosomal subunit. Contacts proteins S3 and S10.</text>
</comment>
<comment type="similarity">
    <text evidence="1">Belongs to the universal ribosomal protein uS14 family.</text>
</comment>
<keyword id="KW-1185">Reference proteome</keyword>
<keyword id="KW-0687">Ribonucleoprotein</keyword>
<keyword id="KW-0689">Ribosomal protein</keyword>
<keyword id="KW-0694">RNA-binding</keyword>
<keyword id="KW-0699">rRNA-binding</keyword>
<name>RS14_CHLTE</name>
<proteinExistence type="inferred from homology"/>
<organism>
    <name type="scientific">Chlorobaculum tepidum (strain ATCC 49652 / DSM 12025 / NBRC 103806 / TLS)</name>
    <name type="common">Chlorobium tepidum</name>
    <dbReference type="NCBI Taxonomy" id="194439"/>
    <lineage>
        <taxon>Bacteria</taxon>
        <taxon>Pseudomonadati</taxon>
        <taxon>Chlorobiota</taxon>
        <taxon>Chlorobiia</taxon>
        <taxon>Chlorobiales</taxon>
        <taxon>Chlorobiaceae</taxon>
        <taxon>Chlorobaculum</taxon>
    </lineage>
</organism>
<sequence length="89" mass="10226">MARKSIIARNEKRKKLVEKYAAKREELKAAGDYQALSQLPRDSSATRLRTRCVLTGRGRGNYRKFGLCRNMFRKLALEGKLPGVRKASW</sequence>
<evidence type="ECO:0000255" key="1">
    <source>
        <dbReference type="HAMAP-Rule" id="MF_00537"/>
    </source>
</evidence>
<evidence type="ECO:0000305" key="2"/>
<accession>Q8KAI5</accession>
<protein>
    <recommendedName>
        <fullName evidence="1">Small ribosomal subunit protein uS14</fullName>
    </recommendedName>
    <alternativeName>
        <fullName evidence="2">30S ribosomal protein S14</fullName>
    </alternativeName>
</protein>
<feature type="chain" id="PRO_1000128361" description="Small ribosomal subunit protein uS14">
    <location>
        <begin position="1"/>
        <end position="89"/>
    </location>
</feature>